<comment type="similarity">
    <text evidence="1">Belongs to the nanovirus U1 protein family.</text>
</comment>
<gene>
    <name type="primary">DNA-U1</name>
    <name type="synonym">C5</name>
</gene>
<name>U1_MDV1</name>
<organismHost>
    <name type="scientific">Astragalus sinicus</name>
    <name type="common">Chinese milk vetch</name>
    <dbReference type="NCBI Taxonomy" id="47065"/>
</organismHost>
<organismHost>
    <name type="scientific">Glycine max</name>
    <name type="common">Soybean</name>
    <name type="synonym">Glycine hispida</name>
    <dbReference type="NCBI Taxonomy" id="3847"/>
</organismHost>
<organismHost>
    <name type="scientific">Phaseolus vulgaris</name>
    <name type="common">Kidney bean</name>
    <name type="synonym">French bean</name>
    <dbReference type="NCBI Taxonomy" id="3885"/>
</organismHost>
<organismHost>
    <name type="scientific">Pisum sativum</name>
    <name type="common">Garden pea</name>
    <name type="synonym">Lathyrus oleraceus</name>
    <dbReference type="NCBI Taxonomy" id="3888"/>
</organismHost>
<organismHost>
    <name type="scientific">Vicia faba</name>
    <name type="common">Broad bean</name>
    <name type="synonym">Faba vulgaris</name>
    <dbReference type="NCBI Taxonomy" id="3906"/>
</organismHost>
<proteinExistence type="inferred from homology"/>
<sequence length="150" mass="17525">MSVNDYSLFDEATDELVSSERKLIAVDCHDDDSQVINVKVEDIFCDMSDKVVLKLQFRLCYKYRKLLDITLLGCRMKVYTELKTPSERSLKSILQKKMNIISDGNYLIGIRMFFININQLINTCKWITRIEDVYPICTLYHVNNTPVIDI</sequence>
<accession>Q9Z0D1</accession>
<protein>
    <recommendedName>
        <fullName>Protein U1</fullName>
    </recommendedName>
</protein>
<keyword id="KW-1185">Reference proteome</keyword>
<dbReference type="EMBL" id="AB000924">
    <property type="protein sequence ID" value="BAA33984.1"/>
    <property type="molecule type" value="Genomic_DNA"/>
</dbReference>
<dbReference type="RefSeq" id="NP_619763.1">
    <property type="nucleotide sequence ID" value="NC_003642.1"/>
</dbReference>
<dbReference type="KEGG" id="vg:995282"/>
<dbReference type="Proteomes" id="UP001507899">
    <property type="component" value="Genome"/>
</dbReference>
<feature type="chain" id="PRO_0000378535" description="Protein U1">
    <location>
        <begin position="1"/>
        <end position="150"/>
    </location>
</feature>
<organism>
    <name type="scientific">Milk vetch dwarf virus (isolate N)</name>
    <name type="common">MDV</name>
    <dbReference type="NCBI Taxonomy" id="291605"/>
    <lineage>
        <taxon>Viruses</taxon>
        <taxon>Monodnaviria</taxon>
        <taxon>Shotokuvirae</taxon>
        <taxon>Cressdnaviricota</taxon>
        <taxon>Arfiviricetes</taxon>
        <taxon>Mulpavirales</taxon>
        <taxon>Nanoviridae</taxon>
        <taxon>Nanovirus</taxon>
        <taxon>Milk vetch dwarf virus</taxon>
    </lineage>
</organism>
<reference key="1">
    <citation type="journal article" date="1998" name="J. Gen. Virol.">
        <title>Sequences of ten circular ssDNA components associated with the milk vetch dwarf virus genome.</title>
        <authorList>
            <person name="Sano Y."/>
            <person name="Wada M."/>
            <person name="Hashimoto Y."/>
            <person name="Matsumoto T."/>
            <person name="Kojima M."/>
        </authorList>
    </citation>
    <scope>NUCLEOTIDE SEQUENCE [GENOMIC DNA]</scope>
</reference>
<evidence type="ECO:0000305" key="1"/>